<comment type="function">
    <text evidence="1">Required for maturation of 30S ribosomal subunits.</text>
</comment>
<comment type="subcellular location">
    <subcellularLocation>
        <location evidence="1">Cytoplasm</location>
    </subcellularLocation>
</comment>
<comment type="similarity">
    <text evidence="1">Belongs to the RimP family.</text>
</comment>
<feature type="chain" id="PRO_1000064754" description="Ribosome maturation factor RimP">
    <location>
        <begin position="1"/>
        <end position="201"/>
    </location>
</feature>
<organism>
    <name type="scientific">Rhizobium johnstonii (strain DSM 114642 / LMG 32736 / 3841)</name>
    <name type="common">Rhizobium leguminosarum bv. viciae</name>
    <dbReference type="NCBI Taxonomy" id="216596"/>
    <lineage>
        <taxon>Bacteria</taxon>
        <taxon>Pseudomonadati</taxon>
        <taxon>Pseudomonadota</taxon>
        <taxon>Alphaproteobacteria</taxon>
        <taxon>Hyphomicrobiales</taxon>
        <taxon>Rhizobiaceae</taxon>
        <taxon>Rhizobium/Agrobacterium group</taxon>
        <taxon>Rhizobium</taxon>
        <taxon>Rhizobium johnstonii</taxon>
    </lineage>
</organism>
<keyword id="KW-0963">Cytoplasm</keyword>
<keyword id="KW-0690">Ribosome biogenesis</keyword>
<protein>
    <recommendedName>
        <fullName evidence="1">Ribosome maturation factor RimP</fullName>
    </recommendedName>
</protein>
<dbReference type="EMBL" id="AM236080">
    <property type="protein sequence ID" value="CAK05616.1"/>
    <property type="molecule type" value="Genomic_DNA"/>
</dbReference>
<dbReference type="RefSeq" id="WP_003544329.1">
    <property type="nucleotide sequence ID" value="NC_008380.1"/>
</dbReference>
<dbReference type="SMR" id="Q1MN36"/>
<dbReference type="EnsemblBacteria" id="CAK05616">
    <property type="protein sequence ID" value="CAK05616"/>
    <property type="gene ID" value="RL0128"/>
</dbReference>
<dbReference type="KEGG" id="rle:RL0128"/>
<dbReference type="eggNOG" id="COG0779">
    <property type="taxonomic scope" value="Bacteria"/>
</dbReference>
<dbReference type="HOGENOM" id="CLU_070525_0_1_5"/>
<dbReference type="Proteomes" id="UP000006575">
    <property type="component" value="Chromosome"/>
</dbReference>
<dbReference type="GO" id="GO:0005829">
    <property type="term" value="C:cytosol"/>
    <property type="evidence" value="ECO:0007669"/>
    <property type="project" value="TreeGrafter"/>
</dbReference>
<dbReference type="GO" id="GO:0000028">
    <property type="term" value="P:ribosomal small subunit assembly"/>
    <property type="evidence" value="ECO:0007669"/>
    <property type="project" value="TreeGrafter"/>
</dbReference>
<dbReference type="GO" id="GO:0006412">
    <property type="term" value="P:translation"/>
    <property type="evidence" value="ECO:0007669"/>
    <property type="project" value="TreeGrafter"/>
</dbReference>
<dbReference type="CDD" id="cd01734">
    <property type="entry name" value="YlxS_C"/>
    <property type="match status" value="1"/>
</dbReference>
<dbReference type="Gene3D" id="2.30.30.180">
    <property type="entry name" value="Ribosome maturation factor RimP, C-terminal domain"/>
    <property type="match status" value="1"/>
</dbReference>
<dbReference type="Gene3D" id="3.30.300.70">
    <property type="entry name" value="RimP-like superfamily, N-terminal"/>
    <property type="match status" value="1"/>
</dbReference>
<dbReference type="HAMAP" id="MF_01077">
    <property type="entry name" value="RimP"/>
    <property type="match status" value="1"/>
</dbReference>
<dbReference type="InterPro" id="IPR003728">
    <property type="entry name" value="Ribosome_maturation_RimP"/>
</dbReference>
<dbReference type="InterPro" id="IPR028998">
    <property type="entry name" value="RimP_C"/>
</dbReference>
<dbReference type="InterPro" id="IPR036847">
    <property type="entry name" value="RimP_C_sf"/>
</dbReference>
<dbReference type="InterPro" id="IPR028989">
    <property type="entry name" value="RimP_N"/>
</dbReference>
<dbReference type="InterPro" id="IPR035956">
    <property type="entry name" value="RimP_N_sf"/>
</dbReference>
<dbReference type="NCBIfam" id="NF000932">
    <property type="entry name" value="PRK00092.2-5"/>
    <property type="match status" value="1"/>
</dbReference>
<dbReference type="PANTHER" id="PTHR33867">
    <property type="entry name" value="RIBOSOME MATURATION FACTOR RIMP"/>
    <property type="match status" value="1"/>
</dbReference>
<dbReference type="PANTHER" id="PTHR33867:SF1">
    <property type="entry name" value="RIBOSOME MATURATION FACTOR RIMP"/>
    <property type="match status" value="1"/>
</dbReference>
<dbReference type="Pfam" id="PF17384">
    <property type="entry name" value="DUF150_C"/>
    <property type="match status" value="1"/>
</dbReference>
<dbReference type="Pfam" id="PF02576">
    <property type="entry name" value="RimP_N"/>
    <property type="match status" value="1"/>
</dbReference>
<dbReference type="SUPFAM" id="SSF74942">
    <property type="entry name" value="YhbC-like, C-terminal domain"/>
    <property type="match status" value="1"/>
</dbReference>
<dbReference type="SUPFAM" id="SSF75420">
    <property type="entry name" value="YhbC-like, N-terminal domain"/>
    <property type="match status" value="1"/>
</dbReference>
<proteinExistence type="inferred from homology"/>
<accession>Q1MN36</accession>
<evidence type="ECO:0000255" key="1">
    <source>
        <dbReference type="HAMAP-Rule" id="MF_01077"/>
    </source>
</evidence>
<sequence length="201" mass="22664">MSDLTNADNEREPRLITETGLDQRLADIIEPVLVDLGFRLIRVRMMNQNGATMQVMAERNDGTMTVQDCEEVSMAISPVLDVEDPVDKEYHLEVSSPGIDRPMVRKSDFVRWQGHLVKCETSILIDNRKRFRGKIVEAGTDGFTLERDQIAYGEEQKVTIPFTALSDAKLILTDDLIRDALRADKLAKAQAANQNEADDEE</sequence>
<name>RIMP_RHIJ3</name>
<reference key="1">
    <citation type="journal article" date="2006" name="Genome Biol.">
        <title>The genome of Rhizobium leguminosarum has recognizable core and accessory components.</title>
        <authorList>
            <person name="Young J.P.W."/>
            <person name="Crossman L.C."/>
            <person name="Johnston A.W.B."/>
            <person name="Thomson N.R."/>
            <person name="Ghazoui Z.F."/>
            <person name="Hull K.H."/>
            <person name="Wexler M."/>
            <person name="Curson A.R.J."/>
            <person name="Todd J.D."/>
            <person name="Poole P.S."/>
            <person name="Mauchline T.H."/>
            <person name="East A.K."/>
            <person name="Quail M.A."/>
            <person name="Churcher C."/>
            <person name="Arrowsmith C."/>
            <person name="Cherevach I."/>
            <person name="Chillingworth T."/>
            <person name="Clarke K."/>
            <person name="Cronin A."/>
            <person name="Davis P."/>
            <person name="Fraser A."/>
            <person name="Hance Z."/>
            <person name="Hauser H."/>
            <person name="Jagels K."/>
            <person name="Moule S."/>
            <person name="Mungall K."/>
            <person name="Norbertczak H."/>
            <person name="Rabbinowitsch E."/>
            <person name="Sanders M."/>
            <person name="Simmonds M."/>
            <person name="Whitehead S."/>
            <person name="Parkhill J."/>
        </authorList>
    </citation>
    <scope>NUCLEOTIDE SEQUENCE [LARGE SCALE GENOMIC DNA]</scope>
    <source>
        <strain>DSM 114642 / LMG 32736 / 3841</strain>
    </source>
</reference>
<gene>
    <name evidence="1" type="primary">rimP</name>
    <name type="ordered locus">RL0128</name>
</gene>